<gene>
    <name evidence="1" type="primary">cobQ</name>
    <name type="ordered locus">BBta_3138</name>
</gene>
<feature type="chain" id="PRO_0000332322" description="Cobyric acid synthase">
    <location>
        <begin position="1"/>
        <end position="492"/>
    </location>
</feature>
<feature type="domain" description="GATase cobBQ-type" evidence="1">
    <location>
        <begin position="252"/>
        <end position="440"/>
    </location>
</feature>
<feature type="active site" description="Nucleophile" evidence="1">
    <location>
        <position position="334"/>
    </location>
</feature>
<feature type="active site" evidence="1">
    <location>
        <position position="432"/>
    </location>
</feature>
<accession>A5EGF9</accession>
<organism>
    <name type="scientific">Bradyrhizobium sp. (strain BTAi1 / ATCC BAA-1182)</name>
    <dbReference type="NCBI Taxonomy" id="288000"/>
    <lineage>
        <taxon>Bacteria</taxon>
        <taxon>Pseudomonadati</taxon>
        <taxon>Pseudomonadota</taxon>
        <taxon>Alphaproteobacteria</taxon>
        <taxon>Hyphomicrobiales</taxon>
        <taxon>Nitrobacteraceae</taxon>
        <taxon>Bradyrhizobium</taxon>
    </lineage>
</organism>
<proteinExistence type="inferred from homology"/>
<keyword id="KW-0169">Cobalamin biosynthesis</keyword>
<keyword id="KW-0315">Glutamine amidotransferase</keyword>
<keyword id="KW-1185">Reference proteome</keyword>
<reference key="1">
    <citation type="journal article" date="2007" name="Science">
        <title>Legumes symbioses: absence of nod genes in photosynthetic bradyrhizobia.</title>
        <authorList>
            <person name="Giraud E."/>
            <person name="Moulin L."/>
            <person name="Vallenet D."/>
            <person name="Barbe V."/>
            <person name="Cytryn E."/>
            <person name="Avarre J.-C."/>
            <person name="Jaubert M."/>
            <person name="Simon D."/>
            <person name="Cartieaux F."/>
            <person name="Prin Y."/>
            <person name="Bena G."/>
            <person name="Hannibal L."/>
            <person name="Fardoux J."/>
            <person name="Kojadinovic M."/>
            <person name="Vuillet L."/>
            <person name="Lajus A."/>
            <person name="Cruveiller S."/>
            <person name="Rouy Z."/>
            <person name="Mangenot S."/>
            <person name="Segurens B."/>
            <person name="Dossat C."/>
            <person name="Franck W.L."/>
            <person name="Chang W.-S."/>
            <person name="Saunders E."/>
            <person name="Bruce D."/>
            <person name="Richardson P."/>
            <person name="Normand P."/>
            <person name="Dreyfus B."/>
            <person name="Pignol D."/>
            <person name="Stacey G."/>
            <person name="Emerich D."/>
            <person name="Vermeglio A."/>
            <person name="Medigue C."/>
            <person name="Sadowsky M."/>
        </authorList>
    </citation>
    <scope>NUCLEOTIDE SEQUENCE [LARGE SCALE GENOMIC DNA]</scope>
    <source>
        <strain>BTAi1 / ATCC BAA-1182</strain>
    </source>
</reference>
<protein>
    <recommendedName>
        <fullName evidence="1">Cobyric acid synthase</fullName>
    </recommendedName>
</protein>
<evidence type="ECO:0000255" key="1">
    <source>
        <dbReference type="HAMAP-Rule" id="MF_00028"/>
    </source>
</evidence>
<dbReference type="EMBL" id="CP000494">
    <property type="protein sequence ID" value="ABQ35253.1"/>
    <property type="molecule type" value="Genomic_DNA"/>
</dbReference>
<dbReference type="RefSeq" id="WP_012043271.1">
    <property type="nucleotide sequence ID" value="NC_009485.1"/>
</dbReference>
<dbReference type="STRING" id="288000.BBta_3138"/>
<dbReference type="KEGG" id="bbt:BBta_3138"/>
<dbReference type="eggNOG" id="COG1492">
    <property type="taxonomic scope" value="Bacteria"/>
</dbReference>
<dbReference type="HOGENOM" id="CLU_019250_2_2_5"/>
<dbReference type="OrthoDB" id="9808302at2"/>
<dbReference type="UniPathway" id="UPA00148"/>
<dbReference type="Proteomes" id="UP000000246">
    <property type="component" value="Chromosome"/>
</dbReference>
<dbReference type="GO" id="GO:0015420">
    <property type="term" value="F:ABC-type vitamin B12 transporter activity"/>
    <property type="evidence" value="ECO:0007669"/>
    <property type="project" value="UniProtKB-UniRule"/>
</dbReference>
<dbReference type="GO" id="GO:0003824">
    <property type="term" value="F:catalytic activity"/>
    <property type="evidence" value="ECO:0007669"/>
    <property type="project" value="InterPro"/>
</dbReference>
<dbReference type="GO" id="GO:0009236">
    <property type="term" value="P:cobalamin biosynthetic process"/>
    <property type="evidence" value="ECO:0007669"/>
    <property type="project" value="UniProtKB-UniRule"/>
</dbReference>
<dbReference type="CDD" id="cd01750">
    <property type="entry name" value="GATase1_CobQ"/>
    <property type="match status" value="1"/>
</dbReference>
<dbReference type="Gene3D" id="3.40.50.880">
    <property type="match status" value="1"/>
</dbReference>
<dbReference type="Gene3D" id="3.40.50.300">
    <property type="entry name" value="P-loop containing nucleotide triphosphate hydrolases"/>
    <property type="match status" value="1"/>
</dbReference>
<dbReference type="HAMAP" id="MF_00028">
    <property type="entry name" value="CobQ"/>
    <property type="match status" value="1"/>
</dbReference>
<dbReference type="InterPro" id="IPR029062">
    <property type="entry name" value="Class_I_gatase-like"/>
</dbReference>
<dbReference type="InterPro" id="IPR002586">
    <property type="entry name" value="CobQ/CobB/MinD/ParA_Nub-bd_dom"/>
</dbReference>
<dbReference type="InterPro" id="IPR033949">
    <property type="entry name" value="CobQ_GATase1"/>
</dbReference>
<dbReference type="InterPro" id="IPR004459">
    <property type="entry name" value="CobQ_synth"/>
</dbReference>
<dbReference type="InterPro" id="IPR011698">
    <property type="entry name" value="GATase_3"/>
</dbReference>
<dbReference type="InterPro" id="IPR027417">
    <property type="entry name" value="P-loop_NTPase"/>
</dbReference>
<dbReference type="NCBIfam" id="TIGR00313">
    <property type="entry name" value="cobQ"/>
    <property type="match status" value="1"/>
</dbReference>
<dbReference type="NCBIfam" id="NF001989">
    <property type="entry name" value="PRK00784.1"/>
    <property type="match status" value="1"/>
</dbReference>
<dbReference type="PANTHER" id="PTHR21343:SF1">
    <property type="entry name" value="COBYRIC ACID SYNTHASE"/>
    <property type="match status" value="1"/>
</dbReference>
<dbReference type="PANTHER" id="PTHR21343">
    <property type="entry name" value="DETHIOBIOTIN SYNTHETASE"/>
    <property type="match status" value="1"/>
</dbReference>
<dbReference type="Pfam" id="PF01656">
    <property type="entry name" value="CbiA"/>
    <property type="match status" value="1"/>
</dbReference>
<dbReference type="Pfam" id="PF07685">
    <property type="entry name" value="GATase_3"/>
    <property type="match status" value="1"/>
</dbReference>
<dbReference type="SUPFAM" id="SSF52317">
    <property type="entry name" value="Class I glutamine amidotransferase-like"/>
    <property type="match status" value="1"/>
</dbReference>
<dbReference type="SUPFAM" id="SSF52540">
    <property type="entry name" value="P-loop containing nucleoside triphosphate hydrolases"/>
    <property type="match status" value="1"/>
</dbReference>
<dbReference type="PROSITE" id="PS51274">
    <property type="entry name" value="GATASE_COBBQ"/>
    <property type="match status" value="1"/>
</dbReference>
<sequence>MPARAIMFQGTGSDVGKSLIVAGLARALTLRGLKVAPFKPQNMSNNAAVTADGGEIGRAQALQARAARRPMTVHMNPVLLKPQSEIGSQVVVQGRVIGNAKASAYQAMKPQLMKAVLDSFHHLIADTDIALVEGAGSASEINLRAGDIANMGFAQATQIPVVLIGDIDRGGVIASLVGTQAVLAPDDAALIAGFLVNKFRGDPALFASGMSEIATRTRWTSLGLIPHFADARRLPAEDALGLPGGGVWSRDRPKIAVLAYPRISNFDEFDPLRLEDGVDLQFLRPGTPIPGDAAVVILPGSKATIADLAALREAGWDIDLQAHLRRGGRVLGICGGYQMLGRMISDPDGHEGAPGAVAGLGLLDIETTLTGDKALRDVEGRLTQDEAPFRGYEMHIGRTDGPAAQHPFLVFSDGRRDGAVAAGGQIAGCYVHGLFADDHLRAHWLRGLGTTASGQSYDADVDATLDALAAHLERYIDIDRILDLARVPRAIT</sequence>
<comment type="function">
    <text evidence="1">Catalyzes amidations at positions B, D, E, and G on adenosylcobyrinic A,C-diamide. NH(2) groups are provided by glutamine, and one molecule of ATP is hydrogenolyzed for each amidation.</text>
</comment>
<comment type="pathway">
    <text evidence="1">Cofactor biosynthesis; adenosylcobalamin biosynthesis.</text>
</comment>
<comment type="similarity">
    <text evidence="1">Belongs to the CobB/CobQ family. CobQ subfamily.</text>
</comment>
<name>COBQ_BRASB</name>